<protein>
    <recommendedName>
        <fullName>Sensor-type histidine kinase PrrB</fullName>
        <ecNumber evidence="1">2.7.13.3</ecNumber>
    </recommendedName>
</protein>
<name>PRRB_MYCBO</name>
<evidence type="ECO:0000250" key="1">
    <source>
        <dbReference type="UniProtKB" id="P9WGK7"/>
    </source>
</evidence>
<evidence type="ECO:0000255" key="2"/>
<evidence type="ECO:0000255" key="3">
    <source>
        <dbReference type="PROSITE-ProRule" id="PRU00102"/>
    </source>
</evidence>
<evidence type="ECO:0000255" key="4">
    <source>
        <dbReference type="PROSITE-ProRule" id="PRU00107"/>
    </source>
</evidence>
<evidence type="ECO:0000305" key="5"/>
<comment type="function">
    <text evidence="1">Member of the two-component regulatory system PrrB/PrrA that is involved specifically in early intracellular multiplication of Mycobacterium and is essential for its viability. Functions as a sensor protein kinase which is autophosphorylated at a histidine residue and transfers its phosphate group to the conserved aspartic acid residue in the regulatory domain of PrrA. In turn, PrrA binds to the upstream promoter regions of target genes including itself to positively regulate their expression.</text>
</comment>
<comment type="catalytic activity">
    <reaction evidence="1">
        <text>ATP + protein L-histidine = ADP + protein N-phospho-L-histidine.</text>
        <dbReference type="EC" id="2.7.13.3"/>
    </reaction>
</comment>
<comment type="subcellular location">
    <subcellularLocation>
        <location evidence="5">Cell membrane</location>
        <topology evidence="5">Multi-pass membrane protein</topology>
    </subcellularLocation>
</comment>
<comment type="PTM">
    <text evidence="1">Autophosphorylated.</text>
</comment>
<keyword id="KW-0067">ATP-binding</keyword>
<keyword id="KW-1003">Cell membrane</keyword>
<keyword id="KW-0418">Kinase</keyword>
<keyword id="KW-0472">Membrane</keyword>
<keyword id="KW-0547">Nucleotide-binding</keyword>
<keyword id="KW-0597">Phosphoprotein</keyword>
<keyword id="KW-1185">Reference proteome</keyword>
<keyword id="KW-0808">Transferase</keyword>
<keyword id="KW-0812">Transmembrane</keyword>
<keyword id="KW-1133">Transmembrane helix</keyword>
<keyword id="KW-0902">Two-component regulatory system</keyword>
<accession>P0A5Z9</accession>
<accession>A0A1R3XWT7</accession>
<accession>Q10560</accession>
<accession>X2BGH8</accession>
<gene>
    <name type="primary">prrB</name>
    <name type="ordered locus">BQ2027_MB0926C</name>
</gene>
<proteinExistence type="inferred from homology"/>
<feature type="chain" id="PRO_0000074855" description="Sensor-type histidine kinase PrrB">
    <location>
        <begin position="1"/>
        <end position="446"/>
    </location>
</feature>
<feature type="transmembrane region" description="Helical" evidence="2">
    <location>
        <begin position="19"/>
        <end position="39"/>
    </location>
</feature>
<feature type="transmembrane region" description="Helical" evidence="2">
    <location>
        <begin position="151"/>
        <end position="171"/>
    </location>
</feature>
<feature type="domain" description="HAMP" evidence="3">
    <location>
        <begin position="172"/>
        <end position="222"/>
    </location>
</feature>
<feature type="domain" description="Histidine kinase" evidence="4">
    <location>
        <begin position="237"/>
        <end position="446"/>
    </location>
</feature>
<feature type="modified residue" description="Phosphohistidine; by autocatalysis" evidence="4">
    <location>
        <position position="240"/>
    </location>
</feature>
<reference key="1">
    <citation type="journal article" date="2003" name="Proc. Natl. Acad. Sci. U.S.A.">
        <title>The complete genome sequence of Mycobacterium bovis.</title>
        <authorList>
            <person name="Garnier T."/>
            <person name="Eiglmeier K."/>
            <person name="Camus J.-C."/>
            <person name="Medina N."/>
            <person name="Mansoor H."/>
            <person name="Pryor M."/>
            <person name="Duthoy S."/>
            <person name="Grondin S."/>
            <person name="Lacroix C."/>
            <person name="Monsempe C."/>
            <person name="Simon S."/>
            <person name="Harris B."/>
            <person name="Atkin R."/>
            <person name="Doggett J."/>
            <person name="Mayes R."/>
            <person name="Keating L."/>
            <person name="Wheeler P.R."/>
            <person name="Parkhill J."/>
            <person name="Barrell B.G."/>
            <person name="Cole S.T."/>
            <person name="Gordon S.V."/>
            <person name="Hewinson R.G."/>
        </authorList>
    </citation>
    <scope>NUCLEOTIDE SEQUENCE [LARGE SCALE GENOMIC DNA]</scope>
    <source>
        <strain>ATCC BAA-935 / AF2122/97</strain>
    </source>
</reference>
<reference key="2">
    <citation type="journal article" date="2017" name="Genome Announc.">
        <title>Updated reference genome sequence and annotation of Mycobacterium bovis AF2122/97.</title>
        <authorList>
            <person name="Malone K.M."/>
            <person name="Farrell D."/>
            <person name="Stuber T.P."/>
            <person name="Schubert O.T."/>
            <person name="Aebersold R."/>
            <person name="Robbe-Austerman S."/>
            <person name="Gordon S.V."/>
        </authorList>
    </citation>
    <scope>NUCLEOTIDE SEQUENCE [LARGE SCALE GENOMIC DNA]</scope>
    <scope>GENOME REANNOTATION</scope>
    <source>
        <strain>ATCC BAA-935 / AF2122/97</strain>
    </source>
</reference>
<organism>
    <name type="scientific">Mycobacterium bovis (strain ATCC BAA-935 / AF2122/97)</name>
    <dbReference type="NCBI Taxonomy" id="233413"/>
    <lineage>
        <taxon>Bacteria</taxon>
        <taxon>Bacillati</taxon>
        <taxon>Actinomycetota</taxon>
        <taxon>Actinomycetes</taxon>
        <taxon>Mycobacteriales</taxon>
        <taxon>Mycobacteriaceae</taxon>
        <taxon>Mycobacterium</taxon>
        <taxon>Mycobacterium tuberculosis complex</taxon>
    </lineage>
</organism>
<dbReference type="EC" id="2.7.13.3" evidence="1"/>
<dbReference type="EMBL" id="LT708304">
    <property type="protein sequence ID" value="SIT99524.1"/>
    <property type="molecule type" value="Genomic_DNA"/>
</dbReference>
<dbReference type="RefSeq" id="NP_854583.1">
    <property type="nucleotide sequence ID" value="NC_002945.3"/>
</dbReference>
<dbReference type="RefSeq" id="WP_003404689.1">
    <property type="nucleotide sequence ID" value="NC_002945.4"/>
</dbReference>
<dbReference type="SMR" id="P0A5Z9"/>
<dbReference type="GeneID" id="45424865"/>
<dbReference type="KEGG" id="mbo:BQ2027_MB0926C"/>
<dbReference type="PATRIC" id="fig|233413.5.peg.1007"/>
<dbReference type="Proteomes" id="UP000001419">
    <property type="component" value="Chromosome"/>
</dbReference>
<dbReference type="GO" id="GO:0005886">
    <property type="term" value="C:plasma membrane"/>
    <property type="evidence" value="ECO:0007669"/>
    <property type="project" value="UniProtKB-SubCell"/>
</dbReference>
<dbReference type="GO" id="GO:0005524">
    <property type="term" value="F:ATP binding"/>
    <property type="evidence" value="ECO:0007669"/>
    <property type="project" value="UniProtKB-KW"/>
</dbReference>
<dbReference type="GO" id="GO:0000155">
    <property type="term" value="F:phosphorelay sensor kinase activity"/>
    <property type="evidence" value="ECO:0007669"/>
    <property type="project" value="InterPro"/>
</dbReference>
<dbReference type="CDD" id="cd06225">
    <property type="entry name" value="HAMP"/>
    <property type="match status" value="1"/>
</dbReference>
<dbReference type="CDD" id="cd00075">
    <property type="entry name" value="HATPase"/>
    <property type="match status" value="1"/>
</dbReference>
<dbReference type="CDD" id="cd00082">
    <property type="entry name" value="HisKA"/>
    <property type="match status" value="1"/>
</dbReference>
<dbReference type="FunFam" id="3.30.565.10:FF:000068">
    <property type="entry name" value="Sensor-type histidine kinase prrB"/>
    <property type="match status" value="1"/>
</dbReference>
<dbReference type="FunFam" id="1.10.287.130:FF:000095">
    <property type="entry name" value="Two-component sensor histidine kinase"/>
    <property type="match status" value="1"/>
</dbReference>
<dbReference type="Gene3D" id="1.10.287.130">
    <property type="match status" value="1"/>
</dbReference>
<dbReference type="Gene3D" id="6.10.340.10">
    <property type="match status" value="1"/>
</dbReference>
<dbReference type="Gene3D" id="3.30.565.10">
    <property type="entry name" value="Histidine kinase-like ATPase, C-terminal domain"/>
    <property type="match status" value="1"/>
</dbReference>
<dbReference type="InterPro" id="IPR003660">
    <property type="entry name" value="HAMP_dom"/>
</dbReference>
<dbReference type="InterPro" id="IPR036890">
    <property type="entry name" value="HATPase_C_sf"/>
</dbReference>
<dbReference type="InterPro" id="IPR005467">
    <property type="entry name" value="His_kinase_dom"/>
</dbReference>
<dbReference type="InterPro" id="IPR003661">
    <property type="entry name" value="HisK_dim/P_dom"/>
</dbReference>
<dbReference type="InterPro" id="IPR036097">
    <property type="entry name" value="HisK_dim/P_sf"/>
</dbReference>
<dbReference type="InterPro" id="IPR004358">
    <property type="entry name" value="Sig_transdc_His_kin-like_C"/>
</dbReference>
<dbReference type="InterPro" id="IPR050428">
    <property type="entry name" value="TCS_sensor_his_kinase"/>
</dbReference>
<dbReference type="PANTHER" id="PTHR45436:SF5">
    <property type="entry name" value="SENSOR HISTIDINE KINASE TRCS"/>
    <property type="match status" value="1"/>
</dbReference>
<dbReference type="PANTHER" id="PTHR45436">
    <property type="entry name" value="SENSOR HISTIDINE KINASE YKOH"/>
    <property type="match status" value="1"/>
</dbReference>
<dbReference type="Pfam" id="PF00672">
    <property type="entry name" value="HAMP"/>
    <property type="match status" value="1"/>
</dbReference>
<dbReference type="Pfam" id="PF02518">
    <property type="entry name" value="HATPase_c"/>
    <property type="match status" value="1"/>
</dbReference>
<dbReference type="Pfam" id="PF00512">
    <property type="entry name" value="HisKA"/>
    <property type="match status" value="1"/>
</dbReference>
<dbReference type="PRINTS" id="PR00344">
    <property type="entry name" value="BCTRLSENSOR"/>
</dbReference>
<dbReference type="SMART" id="SM00304">
    <property type="entry name" value="HAMP"/>
    <property type="match status" value="1"/>
</dbReference>
<dbReference type="SMART" id="SM00387">
    <property type="entry name" value="HATPase_c"/>
    <property type="match status" value="1"/>
</dbReference>
<dbReference type="SMART" id="SM00388">
    <property type="entry name" value="HisKA"/>
    <property type="match status" value="1"/>
</dbReference>
<dbReference type="SUPFAM" id="SSF55874">
    <property type="entry name" value="ATPase domain of HSP90 chaperone/DNA topoisomerase II/histidine kinase"/>
    <property type="match status" value="1"/>
</dbReference>
<dbReference type="SUPFAM" id="SSF47384">
    <property type="entry name" value="Homodimeric domain of signal transducing histidine kinase"/>
    <property type="match status" value="1"/>
</dbReference>
<dbReference type="PROSITE" id="PS50885">
    <property type="entry name" value="HAMP"/>
    <property type="match status" value="1"/>
</dbReference>
<dbReference type="PROSITE" id="PS50109">
    <property type="entry name" value="HIS_KIN"/>
    <property type="match status" value="1"/>
</dbReference>
<sequence>MNILSRIFARTPSLRTRVVVATAIGAAIPVLIVGTVVWVGITNDRKERLDRRLDEAAGFAIPFVPRGLDEIPRSPNDQDALITVRRGNVIKSNSDITLPKLQDDYADTYVRGVRYRVRTVEIPGPEPTSVAVGATYDATVAETNNLHRRVLLICTFAIGAAAVFAWLLAAFAVRPFKQLAEQTRSIDAGDEAPRVEVHGASEAIEIAEAMRGMLQRIWNEQNRTKEALASARDFAAVSSHELRTPLTAMRTNLEVLSTLDLPDDQRKEVLNDVIRTQSRIEATLSALERLAQGELSTSDDHVPVDITDLLDRAAHDAARIYPDLDVSLVPSPTCIIVGLPAGLRLAVDNAIANAVKHGGATLVQLSAVSSRAGVEIAIDDNGSGVPEGERQVVFERFSRGSTASHSGSGLGLALVAQQAQLHGGTASLENSPLGGARLVLRLPGPS</sequence>